<name>Y1561_METJA</name>
<organism>
    <name type="scientific">Methanocaldococcus jannaschii (strain ATCC 43067 / DSM 2661 / JAL-1 / JCM 10045 / NBRC 100440)</name>
    <name type="common">Methanococcus jannaschii</name>
    <dbReference type="NCBI Taxonomy" id="243232"/>
    <lineage>
        <taxon>Archaea</taxon>
        <taxon>Methanobacteriati</taxon>
        <taxon>Methanobacteriota</taxon>
        <taxon>Methanomada group</taxon>
        <taxon>Methanococci</taxon>
        <taxon>Methanococcales</taxon>
        <taxon>Methanocaldococcaceae</taxon>
        <taxon>Methanocaldococcus</taxon>
    </lineage>
</organism>
<reference key="1">
    <citation type="journal article" date="1996" name="Science">
        <title>Complete genome sequence of the methanogenic archaeon, Methanococcus jannaschii.</title>
        <authorList>
            <person name="Bult C.J."/>
            <person name="White O."/>
            <person name="Olsen G.J."/>
            <person name="Zhou L."/>
            <person name="Fleischmann R.D."/>
            <person name="Sutton G.G."/>
            <person name="Blake J.A."/>
            <person name="FitzGerald L.M."/>
            <person name="Clayton R.A."/>
            <person name="Gocayne J.D."/>
            <person name="Kerlavage A.R."/>
            <person name="Dougherty B.A."/>
            <person name="Tomb J.-F."/>
            <person name="Adams M.D."/>
            <person name="Reich C.I."/>
            <person name="Overbeek R."/>
            <person name="Kirkness E.F."/>
            <person name="Weinstock K.G."/>
            <person name="Merrick J.M."/>
            <person name="Glodek A."/>
            <person name="Scott J.L."/>
            <person name="Geoghagen N.S.M."/>
            <person name="Weidman J.F."/>
            <person name="Fuhrmann J.L."/>
            <person name="Nguyen D."/>
            <person name="Utterback T.R."/>
            <person name="Kelley J.M."/>
            <person name="Peterson J.D."/>
            <person name="Sadow P.W."/>
            <person name="Hanna M.C."/>
            <person name="Cotton M.D."/>
            <person name="Roberts K.M."/>
            <person name="Hurst M.A."/>
            <person name="Kaine B.P."/>
            <person name="Borodovsky M."/>
            <person name="Klenk H.-P."/>
            <person name="Fraser C.M."/>
            <person name="Smith H.O."/>
            <person name="Woese C.R."/>
            <person name="Venter J.C."/>
        </authorList>
    </citation>
    <scope>NUCLEOTIDE SEQUENCE [LARGE SCALE GENOMIC DNA]</scope>
    <source>
        <strain>ATCC 43067 / DSM 2661 / JAL-1 / JCM 10045 / NBRC 100440</strain>
    </source>
</reference>
<sequence>MITNKIKIFLISLIFISGVYALQVDAPQYQPNVIHPGDDVDLWIKITNDNYDNEVKNIVVEVSPHYPFELRQVNPIKGKATISHLNPGESDTVYFKLHVDENAPSRDYEIDVKVSYDEINKEDGKETIHHYEITKIYYLHVYGIASFEINGNFSLIPSKTQTVPIEIINTGTGTAKEVNLYIGYSLNSVNAGSESVEVSAYGTTKTQEKTIYYPTAVPISNLPISPVGETKFYLGALKPDNSRVINLKLYTASNLVEGCYQIPAVITWIDEDGTKRAEQITIGAYVKGDILLGISNVVTDPKEIKPGTTYVRIDVTITNNGHAEAKDVKLKLITNKPFKDSWSNCNIKDVGNLLPGVSKTVSFYVDVDKYASAKHYKLPIEISYLDTANNKYKTEKFIDIYVKPKPLFEIITKEVNVTAGKENTVYITIKNVGSEKAERVKISAIRNSGQPFDYPIKSDTIGTLYPNQTGTGVIVIDVDKNAESKPYIITIEIRCAGDSDEGDNNVYVYQEPLKVVVNNSNSKSYWILGIIVVIAIVLVVGYVFKRKNSKDKE</sequence>
<dbReference type="EMBL" id="L77117">
    <property type="protein sequence ID" value="AAB99582.1"/>
    <property type="molecule type" value="Genomic_DNA"/>
</dbReference>
<dbReference type="PIR" id="H64494">
    <property type="entry name" value="H64494"/>
</dbReference>
<dbReference type="RefSeq" id="WP_010871085.1">
    <property type="nucleotide sequence ID" value="NC_000909.1"/>
</dbReference>
<dbReference type="SMR" id="Q58956"/>
<dbReference type="STRING" id="243232.MJ_1561"/>
<dbReference type="PaxDb" id="243232-MJ_1561"/>
<dbReference type="EnsemblBacteria" id="AAB99582">
    <property type="protein sequence ID" value="AAB99582"/>
    <property type="gene ID" value="MJ_1561"/>
</dbReference>
<dbReference type="GeneID" id="1452469"/>
<dbReference type="KEGG" id="mja:MJ_1561"/>
<dbReference type="eggNOG" id="arCOG02080">
    <property type="taxonomic scope" value="Archaea"/>
</dbReference>
<dbReference type="HOGENOM" id="CLU_036466_0_0_2"/>
<dbReference type="InParanoid" id="Q58956"/>
<dbReference type="OrthoDB" id="56770at2157"/>
<dbReference type="PhylomeDB" id="Q58956"/>
<dbReference type="Proteomes" id="UP000000805">
    <property type="component" value="Chromosome"/>
</dbReference>
<dbReference type="GO" id="GO:0005886">
    <property type="term" value="C:plasma membrane"/>
    <property type="evidence" value="ECO:0007669"/>
    <property type="project" value="UniProtKB-SubCell"/>
</dbReference>
<dbReference type="Gene3D" id="2.60.40.10">
    <property type="entry name" value="Immunoglobulins"/>
    <property type="match status" value="2"/>
</dbReference>
<dbReference type="InterPro" id="IPR013783">
    <property type="entry name" value="Ig-like_fold"/>
</dbReference>
<dbReference type="PANTHER" id="PTHR35902:SF3">
    <property type="entry name" value="NPCBM-ASSOCIATED, NEW3 DOMAIN OF ALPHA-GALACTOSIDASE"/>
    <property type="match status" value="1"/>
</dbReference>
<dbReference type="PANTHER" id="PTHR35902">
    <property type="entry name" value="S-LAYER DOMAIN-LIKE PROTEIN-RELATED"/>
    <property type="match status" value="1"/>
</dbReference>
<protein>
    <recommendedName>
        <fullName>Uncharacterized protein MJ1561</fullName>
    </recommendedName>
</protein>
<gene>
    <name type="ordered locus">MJ1561</name>
</gene>
<feature type="chain" id="PRO_0000107412" description="Uncharacterized protein MJ1561">
    <location>
        <begin position="1"/>
        <end position="553"/>
    </location>
</feature>
<feature type="transmembrane region" description="Helical" evidence="1">
    <location>
        <begin position="6"/>
        <end position="26"/>
    </location>
</feature>
<feature type="transmembrane region" description="Helical" evidence="1">
    <location>
        <begin position="524"/>
        <end position="544"/>
    </location>
</feature>
<comment type="subcellular location">
    <subcellularLocation>
        <location evidence="2">Cell membrane</location>
        <topology evidence="2">Multi-pass membrane protein</topology>
    </subcellularLocation>
</comment>
<comment type="similarity">
    <text evidence="2">To M.jannaschii MJ0795 and MJ1506.</text>
</comment>
<evidence type="ECO:0000255" key="1"/>
<evidence type="ECO:0000305" key="2"/>
<keyword id="KW-1003">Cell membrane</keyword>
<keyword id="KW-0472">Membrane</keyword>
<keyword id="KW-1185">Reference proteome</keyword>
<keyword id="KW-0812">Transmembrane</keyword>
<keyword id="KW-1133">Transmembrane helix</keyword>
<accession>Q58956</accession>
<proteinExistence type="predicted"/>